<proteinExistence type="inferred from homology"/>
<feature type="chain" id="PRO_1000126954" description="Large ribosomal subunit protein bL9">
    <location>
        <begin position="1"/>
        <end position="152"/>
    </location>
</feature>
<sequence length="152" mass="16804">MAKRVQLVLKEDILSLGKDGDVVEVAPGYARNFLLPHGKALPVTPAVMKQVEHRRAKQKEHEAALKDEALAFETALKTIGRFTVKKQVGDDGVLFGTVTNGDIAEAIEKATEKEIDRRTISVPEVHAIGQYKVQIKLHHEVTAEINLEVVSY</sequence>
<comment type="function">
    <text evidence="1">Binds to the 23S rRNA.</text>
</comment>
<comment type="similarity">
    <text evidence="1">Belongs to the bacterial ribosomal protein bL9 family.</text>
</comment>
<evidence type="ECO:0000255" key="1">
    <source>
        <dbReference type="HAMAP-Rule" id="MF_00503"/>
    </source>
</evidence>
<evidence type="ECO:0000305" key="2"/>
<accession>A9BDB8</accession>
<gene>
    <name evidence="1" type="primary">rplI</name>
    <name evidence="1" type="synonym">rpl9</name>
    <name type="ordered locus">P9211_18001</name>
</gene>
<reference key="1">
    <citation type="journal article" date="2007" name="PLoS Genet.">
        <title>Patterns and implications of gene gain and loss in the evolution of Prochlorococcus.</title>
        <authorList>
            <person name="Kettler G.C."/>
            <person name="Martiny A.C."/>
            <person name="Huang K."/>
            <person name="Zucker J."/>
            <person name="Coleman M.L."/>
            <person name="Rodrigue S."/>
            <person name="Chen F."/>
            <person name="Lapidus A."/>
            <person name="Ferriera S."/>
            <person name="Johnson J."/>
            <person name="Steglich C."/>
            <person name="Church G.M."/>
            <person name="Richardson P."/>
            <person name="Chisholm S.W."/>
        </authorList>
    </citation>
    <scope>NUCLEOTIDE SEQUENCE [LARGE SCALE GENOMIC DNA]</scope>
    <source>
        <strain>MIT 9211</strain>
    </source>
</reference>
<keyword id="KW-1185">Reference proteome</keyword>
<keyword id="KW-0687">Ribonucleoprotein</keyword>
<keyword id="KW-0689">Ribosomal protein</keyword>
<keyword id="KW-0694">RNA-binding</keyword>
<keyword id="KW-0699">rRNA-binding</keyword>
<protein>
    <recommendedName>
        <fullName evidence="1">Large ribosomal subunit protein bL9</fullName>
    </recommendedName>
    <alternativeName>
        <fullName evidence="2">50S ribosomal protein L9</fullName>
    </alternativeName>
</protein>
<dbReference type="EMBL" id="CP000878">
    <property type="protein sequence ID" value="ABX09731.1"/>
    <property type="molecule type" value="Genomic_DNA"/>
</dbReference>
<dbReference type="RefSeq" id="WP_012196351.1">
    <property type="nucleotide sequence ID" value="NC_009976.1"/>
</dbReference>
<dbReference type="SMR" id="A9BDB8"/>
<dbReference type="STRING" id="93059.P9211_18001"/>
<dbReference type="KEGG" id="pmj:P9211_18001"/>
<dbReference type="eggNOG" id="COG0359">
    <property type="taxonomic scope" value="Bacteria"/>
</dbReference>
<dbReference type="HOGENOM" id="CLU_078938_5_1_3"/>
<dbReference type="OrthoDB" id="9788336at2"/>
<dbReference type="Proteomes" id="UP000000788">
    <property type="component" value="Chromosome"/>
</dbReference>
<dbReference type="GO" id="GO:1990904">
    <property type="term" value="C:ribonucleoprotein complex"/>
    <property type="evidence" value="ECO:0007669"/>
    <property type="project" value="UniProtKB-KW"/>
</dbReference>
<dbReference type="GO" id="GO:0005840">
    <property type="term" value="C:ribosome"/>
    <property type="evidence" value="ECO:0007669"/>
    <property type="project" value="UniProtKB-KW"/>
</dbReference>
<dbReference type="GO" id="GO:0019843">
    <property type="term" value="F:rRNA binding"/>
    <property type="evidence" value="ECO:0007669"/>
    <property type="project" value="UniProtKB-UniRule"/>
</dbReference>
<dbReference type="GO" id="GO:0003735">
    <property type="term" value="F:structural constituent of ribosome"/>
    <property type="evidence" value="ECO:0007669"/>
    <property type="project" value="InterPro"/>
</dbReference>
<dbReference type="GO" id="GO:0006412">
    <property type="term" value="P:translation"/>
    <property type="evidence" value="ECO:0007669"/>
    <property type="project" value="UniProtKB-UniRule"/>
</dbReference>
<dbReference type="Gene3D" id="3.10.430.100">
    <property type="entry name" value="Ribosomal protein L9, C-terminal domain"/>
    <property type="match status" value="1"/>
</dbReference>
<dbReference type="Gene3D" id="3.40.5.10">
    <property type="entry name" value="Ribosomal protein L9, N-terminal domain"/>
    <property type="match status" value="1"/>
</dbReference>
<dbReference type="HAMAP" id="MF_00503">
    <property type="entry name" value="Ribosomal_bL9"/>
    <property type="match status" value="1"/>
</dbReference>
<dbReference type="InterPro" id="IPR000244">
    <property type="entry name" value="Ribosomal_bL9"/>
</dbReference>
<dbReference type="InterPro" id="IPR009027">
    <property type="entry name" value="Ribosomal_bL9/RNase_H1_N"/>
</dbReference>
<dbReference type="InterPro" id="IPR020594">
    <property type="entry name" value="Ribosomal_bL9_bac/chp"/>
</dbReference>
<dbReference type="InterPro" id="IPR020069">
    <property type="entry name" value="Ribosomal_bL9_C"/>
</dbReference>
<dbReference type="InterPro" id="IPR036791">
    <property type="entry name" value="Ribosomal_bL9_C_sf"/>
</dbReference>
<dbReference type="InterPro" id="IPR020070">
    <property type="entry name" value="Ribosomal_bL9_N"/>
</dbReference>
<dbReference type="InterPro" id="IPR036935">
    <property type="entry name" value="Ribosomal_bL9_N_sf"/>
</dbReference>
<dbReference type="NCBIfam" id="TIGR00158">
    <property type="entry name" value="L9"/>
    <property type="match status" value="1"/>
</dbReference>
<dbReference type="PANTHER" id="PTHR21368">
    <property type="entry name" value="50S RIBOSOMAL PROTEIN L9"/>
    <property type="match status" value="1"/>
</dbReference>
<dbReference type="Pfam" id="PF03948">
    <property type="entry name" value="Ribosomal_L9_C"/>
    <property type="match status" value="1"/>
</dbReference>
<dbReference type="Pfam" id="PF01281">
    <property type="entry name" value="Ribosomal_L9_N"/>
    <property type="match status" value="1"/>
</dbReference>
<dbReference type="SUPFAM" id="SSF55658">
    <property type="entry name" value="L9 N-domain-like"/>
    <property type="match status" value="1"/>
</dbReference>
<dbReference type="SUPFAM" id="SSF55653">
    <property type="entry name" value="Ribosomal protein L9 C-domain"/>
    <property type="match status" value="1"/>
</dbReference>
<dbReference type="PROSITE" id="PS00651">
    <property type="entry name" value="RIBOSOMAL_L9"/>
    <property type="match status" value="1"/>
</dbReference>
<organism>
    <name type="scientific">Prochlorococcus marinus (strain MIT 9211)</name>
    <dbReference type="NCBI Taxonomy" id="93059"/>
    <lineage>
        <taxon>Bacteria</taxon>
        <taxon>Bacillati</taxon>
        <taxon>Cyanobacteriota</taxon>
        <taxon>Cyanophyceae</taxon>
        <taxon>Synechococcales</taxon>
        <taxon>Prochlorococcaceae</taxon>
        <taxon>Prochlorococcus</taxon>
    </lineage>
</organism>
<name>RL9_PROM4</name>